<sequence>MNIRPLHDKVILKREDVETKSAGGIVLTGSAATKSTRAKVLAVGPGRLLENGSVHPMHVKVGDTVIFSDGYGVKTEKIDGEEVLIISESDILAIVE</sequence>
<dbReference type="EMBL" id="D28817">
    <property type="protein sequence ID" value="BAA05976.1"/>
    <property type="molecule type" value="Genomic_DNA"/>
</dbReference>
<dbReference type="RefSeq" id="WP_233115494.1">
    <property type="nucleotide sequence ID" value="NZ_JABJYA010000020.1"/>
</dbReference>
<dbReference type="SMR" id="P46399"/>
<dbReference type="STRING" id="714.ACT75_06265"/>
<dbReference type="eggNOG" id="COG0234">
    <property type="taxonomic scope" value="Bacteria"/>
</dbReference>
<dbReference type="GO" id="GO:0005737">
    <property type="term" value="C:cytoplasm"/>
    <property type="evidence" value="ECO:0007669"/>
    <property type="project" value="UniProtKB-SubCell"/>
</dbReference>
<dbReference type="GO" id="GO:0005524">
    <property type="term" value="F:ATP binding"/>
    <property type="evidence" value="ECO:0007669"/>
    <property type="project" value="InterPro"/>
</dbReference>
<dbReference type="GO" id="GO:0046872">
    <property type="term" value="F:metal ion binding"/>
    <property type="evidence" value="ECO:0007669"/>
    <property type="project" value="TreeGrafter"/>
</dbReference>
<dbReference type="GO" id="GO:0044183">
    <property type="term" value="F:protein folding chaperone"/>
    <property type="evidence" value="ECO:0007669"/>
    <property type="project" value="InterPro"/>
</dbReference>
<dbReference type="GO" id="GO:0051087">
    <property type="term" value="F:protein-folding chaperone binding"/>
    <property type="evidence" value="ECO:0007669"/>
    <property type="project" value="TreeGrafter"/>
</dbReference>
<dbReference type="GO" id="GO:0051082">
    <property type="term" value="F:unfolded protein binding"/>
    <property type="evidence" value="ECO:0007669"/>
    <property type="project" value="TreeGrafter"/>
</dbReference>
<dbReference type="GO" id="GO:0051085">
    <property type="term" value="P:chaperone cofactor-dependent protein refolding"/>
    <property type="evidence" value="ECO:0007669"/>
    <property type="project" value="TreeGrafter"/>
</dbReference>
<dbReference type="CDD" id="cd00320">
    <property type="entry name" value="cpn10"/>
    <property type="match status" value="1"/>
</dbReference>
<dbReference type="FunFam" id="2.30.33.40:FF:000001">
    <property type="entry name" value="10 kDa chaperonin"/>
    <property type="match status" value="1"/>
</dbReference>
<dbReference type="Gene3D" id="2.30.33.40">
    <property type="entry name" value="GroES chaperonin"/>
    <property type="match status" value="1"/>
</dbReference>
<dbReference type="HAMAP" id="MF_00580">
    <property type="entry name" value="CH10"/>
    <property type="match status" value="1"/>
</dbReference>
<dbReference type="InterPro" id="IPR020818">
    <property type="entry name" value="Chaperonin_GroES"/>
</dbReference>
<dbReference type="InterPro" id="IPR037124">
    <property type="entry name" value="Chaperonin_GroES_sf"/>
</dbReference>
<dbReference type="InterPro" id="IPR018369">
    <property type="entry name" value="Chaprnonin_Cpn10_CS"/>
</dbReference>
<dbReference type="InterPro" id="IPR011032">
    <property type="entry name" value="GroES-like_sf"/>
</dbReference>
<dbReference type="NCBIfam" id="NF001526">
    <property type="entry name" value="PRK00364.1-1"/>
    <property type="match status" value="1"/>
</dbReference>
<dbReference type="PANTHER" id="PTHR10772">
    <property type="entry name" value="10 KDA HEAT SHOCK PROTEIN"/>
    <property type="match status" value="1"/>
</dbReference>
<dbReference type="PANTHER" id="PTHR10772:SF58">
    <property type="entry name" value="CO-CHAPERONIN GROES"/>
    <property type="match status" value="1"/>
</dbReference>
<dbReference type="Pfam" id="PF00166">
    <property type="entry name" value="Cpn10"/>
    <property type="match status" value="1"/>
</dbReference>
<dbReference type="PRINTS" id="PR00297">
    <property type="entry name" value="CHAPERONIN10"/>
</dbReference>
<dbReference type="SMART" id="SM00883">
    <property type="entry name" value="Cpn10"/>
    <property type="match status" value="1"/>
</dbReference>
<dbReference type="SUPFAM" id="SSF50129">
    <property type="entry name" value="GroES-like"/>
    <property type="match status" value="1"/>
</dbReference>
<dbReference type="PROSITE" id="PS00681">
    <property type="entry name" value="CHAPERONINS_CPN10"/>
    <property type="match status" value="1"/>
</dbReference>
<comment type="function">
    <text evidence="1">Together with the chaperonin GroEL, plays an essential role in assisting protein folding. The GroEL-GroES system forms a nano-cage that allows encapsulation of the non-native substrate proteins and provides a physical environment optimized to promote and accelerate protein folding. GroES binds to the apical surface of the GroEL ring, thereby capping the opening of the GroEL channel.</text>
</comment>
<comment type="subunit">
    <text evidence="1">Heptamer of 7 subunits arranged in a ring. Interacts with the chaperonin GroEL.</text>
</comment>
<comment type="subcellular location">
    <subcellularLocation>
        <location evidence="1">Cytoplasm</location>
    </subcellularLocation>
</comment>
<comment type="similarity">
    <text evidence="1 2">Belongs to the GroES chaperonin family.</text>
</comment>
<proteinExistence type="inferred from homology"/>
<evidence type="ECO:0000255" key="1">
    <source>
        <dbReference type="HAMAP-Rule" id="MF_00580"/>
    </source>
</evidence>
<evidence type="ECO:0000305" key="2"/>
<accession>P46399</accession>
<protein>
    <recommendedName>
        <fullName evidence="1">Co-chaperonin GroES</fullName>
    </recommendedName>
    <alternativeName>
        <fullName evidence="1">10 kDa chaperonin</fullName>
    </alternativeName>
    <alternativeName>
        <fullName evidence="1">Chaperonin-10</fullName>
        <shortName evidence="1">Cpn10</shortName>
    </alternativeName>
</protein>
<gene>
    <name evidence="1" type="primary">groES</name>
    <name evidence="1" type="synonym">groS</name>
</gene>
<keyword id="KW-0143">Chaperone</keyword>
<keyword id="KW-0963">Cytoplasm</keyword>
<organism>
    <name type="scientific">Aggregatibacter actinomycetemcomitans</name>
    <name type="common">Actinobacillus actinomycetemcomitans</name>
    <name type="synonym">Haemophilus actinomycetemcomitans</name>
    <dbReference type="NCBI Taxonomy" id="714"/>
    <lineage>
        <taxon>Bacteria</taxon>
        <taxon>Pseudomonadati</taxon>
        <taxon>Pseudomonadota</taxon>
        <taxon>Gammaproteobacteria</taxon>
        <taxon>Pasteurellales</taxon>
        <taxon>Pasteurellaceae</taxon>
        <taxon>Aggregatibacter</taxon>
    </lineage>
</organism>
<name>CH10_AGGAC</name>
<reference key="1">
    <citation type="journal article" date="1995" name="Oral Microbiol. Immunol.">
        <title>Molecular and immunological characterization of a 64-kDa protein of Actinobacillus actinomycetemcomitans.</title>
        <authorList>
            <person name="Nakano T."/>
            <person name="Inai Y."/>
            <person name="Yamahsita Y."/>
            <person name="Kusuzaki-Nagira T."/>
            <person name="Nagaoka S."/>
            <person name="Okahashi N."/>
            <person name="Koga T."/>
            <person name="Nishihara T."/>
        </authorList>
    </citation>
    <scope>NUCLEOTIDE SEQUENCE [GENOMIC DNA]</scope>
    <source>
        <strain>ATCC 43718 / FDC Y4 / Serotype b</strain>
    </source>
</reference>
<feature type="chain" id="PRO_0000174679" description="Co-chaperonin GroES">
    <location>
        <begin position="1"/>
        <end position="96"/>
    </location>
</feature>